<organism>
    <name type="scientific">Streptococcus suis (strain 05ZYH33)</name>
    <dbReference type="NCBI Taxonomy" id="391295"/>
    <lineage>
        <taxon>Bacteria</taxon>
        <taxon>Bacillati</taxon>
        <taxon>Bacillota</taxon>
        <taxon>Bacilli</taxon>
        <taxon>Lactobacillales</taxon>
        <taxon>Streptococcaceae</taxon>
        <taxon>Streptococcus</taxon>
    </lineage>
</organism>
<name>KHSE_STRSY</name>
<proteinExistence type="inferred from homology"/>
<comment type="function">
    <text evidence="1">Catalyzes the ATP-dependent phosphorylation of L-homoserine to L-homoserine phosphate.</text>
</comment>
<comment type="catalytic activity">
    <reaction evidence="1">
        <text>L-homoserine + ATP = O-phospho-L-homoserine + ADP + H(+)</text>
        <dbReference type="Rhea" id="RHEA:13985"/>
        <dbReference type="ChEBI" id="CHEBI:15378"/>
        <dbReference type="ChEBI" id="CHEBI:30616"/>
        <dbReference type="ChEBI" id="CHEBI:57476"/>
        <dbReference type="ChEBI" id="CHEBI:57590"/>
        <dbReference type="ChEBI" id="CHEBI:456216"/>
        <dbReference type="EC" id="2.7.1.39"/>
    </reaction>
</comment>
<comment type="pathway">
    <text evidence="1">Amino-acid biosynthesis; L-threonine biosynthesis; L-threonine from L-aspartate: step 4/5.</text>
</comment>
<comment type="subcellular location">
    <subcellularLocation>
        <location evidence="1">Cytoplasm</location>
    </subcellularLocation>
</comment>
<comment type="similarity">
    <text evidence="1">Belongs to the GHMP kinase family. Homoserine kinase subfamily.</text>
</comment>
<accession>A4VUI0</accession>
<protein>
    <recommendedName>
        <fullName evidence="1">Homoserine kinase</fullName>
        <shortName evidence="1">HK</shortName>
        <shortName evidence="1">HSK</shortName>
        <ecNumber evidence="1">2.7.1.39</ecNumber>
    </recommendedName>
</protein>
<reference key="1">
    <citation type="journal article" date="2007" name="PLoS ONE">
        <title>A glimpse of streptococcal toxic shock syndrome from comparative genomics of S. suis 2 Chinese isolates.</title>
        <authorList>
            <person name="Chen C."/>
            <person name="Tang J."/>
            <person name="Dong W."/>
            <person name="Wang C."/>
            <person name="Feng Y."/>
            <person name="Wang J."/>
            <person name="Zheng F."/>
            <person name="Pan X."/>
            <person name="Liu D."/>
            <person name="Li M."/>
            <person name="Song Y."/>
            <person name="Zhu X."/>
            <person name="Sun H."/>
            <person name="Feng T."/>
            <person name="Guo Z."/>
            <person name="Ju A."/>
            <person name="Ge J."/>
            <person name="Dong Y."/>
            <person name="Sun W."/>
            <person name="Jiang Y."/>
            <person name="Wang J."/>
            <person name="Yan J."/>
            <person name="Yang H."/>
            <person name="Wang X."/>
            <person name="Gao G.F."/>
            <person name="Yang R."/>
            <person name="Wang J."/>
            <person name="Yu J."/>
        </authorList>
    </citation>
    <scope>NUCLEOTIDE SEQUENCE [LARGE SCALE GENOMIC DNA]</scope>
    <source>
        <strain>05ZYH33</strain>
    </source>
</reference>
<feature type="chain" id="PRO_1000049177" description="Homoserine kinase">
    <location>
        <begin position="1"/>
        <end position="286"/>
    </location>
</feature>
<feature type="binding site" evidence="1">
    <location>
        <begin position="78"/>
        <end position="88"/>
    </location>
    <ligand>
        <name>ATP</name>
        <dbReference type="ChEBI" id="CHEBI:30616"/>
    </ligand>
</feature>
<sequence>MKIIIPATSANIGPGFDSVGVALSKYLTIEVFEETDEWVIEHNLEHVPSDKNNLLIKTALKIEKGLQPHRIRMISDIPLARGLGSSSSVIVAGIELANQLAGLNMTADEKLLKATEIEGHPDNVAPAIFGNLVISSYVNKRVQAVVTEFPEASFVAFIPNYPLRTVESRGVLPSQMGYKKAVAASAIANVAVASLMAGDLEKAGKAIQSDMFHEPFRQLLVKEFCPIKQTAQELGAYATYLSGAGPTVMVLAPKDREDAIVLALEELNLDGTVHRLQVDTKGIAIV</sequence>
<evidence type="ECO:0000255" key="1">
    <source>
        <dbReference type="HAMAP-Rule" id="MF_00384"/>
    </source>
</evidence>
<keyword id="KW-0028">Amino-acid biosynthesis</keyword>
<keyword id="KW-0067">ATP-binding</keyword>
<keyword id="KW-0963">Cytoplasm</keyword>
<keyword id="KW-0418">Kinase</keyword>
<keyword id="KW-0547">Nucleotide-binding</keyword>
<keyword id="KW-0791">Threonine biosynthesis</keyword>
<keyword id="KW-0808">Transferase</keyword>
<gene>
    <name evidence="1" type="primary">thrB</name>
    <name type="ordered locus">SSU05_0803</name>
</gene>
<dbReference type="EC" id="2.7.1.39" evidence="1"/>
<dbReference type="EMBL" id="CP000407">
    <property type="protein sequence ID" value="ABP89769.1"/>
    <property type="molecule type" value="Genomic_DNA"/>
</dbReference>
<dbReference type="SMR" id="A4VUI0"/>
<dbReference type="STRING" id="391295.SSU05_0803"/>
<dbReference type="KEGG" id="ssu:SSU05_0803"/>
<dbReference type="eggNOG" id="COG0083">
    <property type="taxonomic scope" value="Bacteria"/>
</dbReference>
<dbReference type="HOGENOM" id="CLU_041243_0_0_9"/>
<dbReference type="UniPathway" id="UPA00050">
    <property type="reaction ID" value="UER00064"/>
</dbReference>
<dbReference type="GO" id="GO:0005737">
    <property type="term" value="C:cytoplasm"/>
    <property type="evidence" value="ECO:0007669"/>
    <property type="project" value="UniProtKB-SubCell"/>
</dbReference>
<dbReference type="GO" id="GO:0005524">
    <property type="term" value="F:ATP binding"/>
    <property type="evidence" value="ECO:0007669"/>
    <property type="project" value="UniProtKB-UniRule"/>
</dbReference>
<dbReference type="GO" id="GO:0004413">
    <property type="term" value="F:homoserine kinase activity"/>
    <property type="evidence" value="ECO:0007669"/>
    <property type="project" value="UniProtKB-UniRule"/>
</dbReference>
<dbReference type="GO" id="GO:0009088">
    <property type="term" value="P:threonine biosynthetic process"/>
    <property type="evidence" value="ECO:0007669"/>
    <property type="project" value="UniProtKB-UniRule"/>
</dbReference>
<dbReference type="Gene3D" id="3.30.230.10">
    <property type="match status" value="1"/>
</dbReference>
<dbReference type="Gene3D" id="3.30.70.890">
    <property type="entry name" value="GHMP kinase, C-terminal domain"/>
    <property type="match status" value="1"/>
</dbReference>
<dbReference type="HAMAP" id="MF_00384">
    <property type="entry name" value="Homoser_kinase"/>
    <property type="match status" value="1"/>
</dbReference>
<dbReference type="InterPro" id="IPR013750">
    <property type="entry name" value="GHMP_kinase_C_dom"/>
</dbReference>
<dbReference type="InterPro" id="IPR036554">
    <property type="entry name" value="GHMP_kinase_C_sf"/>
</dbReference>
<dbReference type="InterPro" id="IPR006204">
    <property type="entry name" value="GHMP_kinase_N_dom"/>
</dbReference>
<dbReference type="InterPro" id="IPR006203">
    <property type="entry name" value="GHMP_knse_ATP-bd_CS"/>
</dbReference>
<dbReference type="InterPro" id="IPR000870">
    <property type="entry name" value="Homoserine_kinase"/>
</dbReference>
<dbReference type="InterPro" id="IPR020568">
    <property type="entry name" value="Ribosomal_Su5_D2-typ_SF"/>
</dbReference>
<dbReference type="InterPro" id="IPR014721">
    <property type="entry name" value="Ribsml_uS5_D2-typ_fold_subgr"/>
</dbReference>
<dbReference type="NCBIfam" id="TIGR00191">
    <property type="entry name" value="thrB"/>
    <property type="match status" value="1"/>
</dbReference>
<dbReference type="PANTHER" id="PTHR20861:SF1">
    <property type="entry name" value="HOMOSERINE KINASE"/>
    <property type="match status" value="1"/>
</dbReference>
<dbReference type="PANTHER" id="PTHR20861">
    <property type="entry name" value="HOMOSERINE/4-DIPHOSPHOCYTIDYL-2-C-METHYL-D-ERYTHRITOL KINASE"/>
    <property type="match status" value="1"/>
</dbReference>
<dbReference type="Pfam" id="PF08544">
    <property type="entry name" value="GHMP_kinases_C"/>
    <property type="match status" value="1"/>
</dbReference>
<dbReference type="Pfam" id="PF00288">
    <property type="entry name" value="GHMP_kinases_N"/>
    <property type="match status" value="1"/>
</dbReference>
<dbReference type="PIRSF" id="PIRSF000676">
    <property type="entry name" value="Homoser_kin"/>
    <property type="match status" value="1"/>
</dbReference>
<dbReference type="PRINTS" id="PR00958">
    <property type="entry name" value="HOMSERKINASE"/>
</dbReference>
<dbReference type="SUPFAM" id="SSF55060">
    <property type="entry name" value="GHMP Kinase, C-terminal domain"/>
    <property type="match status" value="1"/>
</dbReference>
<dbReference type="SUPFAM" id="SSF54211">
    <property type="entry name" value="Ribosomal protein S5 domain 2-like"/>
    <property type="match status" value="1"/>
</dbReference>
<dbReference type="PROSITE" id="PS00627">
    <property type="entry name" value="GHMP_KINASES_ATP"/>
    <property type="match status" value="1"/>
</dbReference>